<gene>
    <name evidence="1" type="primary">hisE</name>
    <name type="ordered locus">MLBr01309</name>
</gene>
<protein>
    <recommendedName>
        <fullName evidence="1">Phosphoribosyl-ATP pyrophosphatase</fullName>
        <shortName evidence="1">PRA-PH</shortName>
        <ecNumber evidence="1">3.6.1.31</ecNumber>
    </recommendedName>
</protein>
<feature type="chain" id="PRO_1000149057" description="Phosphoribosyl-ATP pyrophosphatase">
    <location>
        <begin position="1"/>
        <end position="93"/>
    </location>
</feature>
<organism>
    <name type="scientific">Mycobacterium leprae (strain Br4923)</name>
    <dbReference type="NCBI Taxonomy" id="561304"/>
    <lineage>
        <taxon>Bacteria</taxon>
        <taxon>Bacillati</taxon>
        <taxon>Actinomycetota</taxon>
        <taxon>Actinomycetes</taxon>
        <taxon>Mycobacteriales</taxon>
        <taxon>Mycobacteriaceae</taxon>
        <taxon>Mycobacterium</taxon>
    </lineage>
</organism>
<proteinExistence type="inferred from homology"/>
<accession>B8ZRE4</accession>
<evidence type="ECO:0000255" key="1">
    <source>
        <dbReference type="HAMAP-Rule" id="MF_01020"/>
    </source>
</evidence>
<dbReference type="EC" id="3.6.1.31" evidence="1"/>
<dbReference type="EMBL" id="FM211192">
    <property type="protein sequence ID" value="CAR71404.1"/>
    <property type="molecule type" value="Genomic_DNA"/>
</dbReference>
<dbReference type="SMR" id="B8ZRE4"/>
<dbReference type="KEGG" id="mlb:MLBr01309"/>
<dbReference type="HOGENOM" id="CLU_123337_2_0_11"/>
<dbReference type="UniPathway" id="UPA00031">
    <property type="reaction ID" value="UER00007"/>
</dbReference>
<dbReference type="Proteomes" id="UP000006900">
    <property type="component" value="Chromosome"/>
</dbReference>
<dbReference type="GO" id="GO:0005737">
    <property type="term" value="C:cytoplasm"/>
    <property type="evidence" value="ECO:0007669"/>
    <property type="project" value="UniProtKB-SubCell"/>
</dbReference>
<dbReference type="GO" id="GO:0005524">
    <property type="term" value="F:ATP binding"/>
    <property type="evidence" value="ECO:0007669"/>
    <property type="project" value="UniProtKB-KW"/>
</dbReference>
<dbReference type="GO" id="GO:0004636">
    <property type="term" value="F:phosphoribosyl-ATP diphosphatase activity"/>
    <property type="evidence" value="ECO:0007669"/>
    <property type="project" value="UniProtKB-UniRule"/>
</dbReference>
<dbReference type="GO" id="GO:0000105">
    <property type="term" value="P:L-histidine biosynthetic process"/>
    <property type="evidence" value="ECO:0007669"/>
    <property type="project" value="UniProtKB-UniRule"/>
</dbReference>
<dbReference type="CDD" id="cd11547">
    <property type="entry name" value="NTP-PPase_HisE"/>
    <property type="match status" value="1"/>
</dbReference>
<dbReference type="Gene3D" id="1.10.287.1080">
    <property type="entry name" value="MazG-like"/>
    <property type="match status" value="1"/>
</dbReference>
<dbReference type="HAMAP" id="MF_01020">
    <property type="entry name" value="HisE"/>
    <property type="match status" value="1"/>
</dbReference>
<dbReference type="InterPro" id="IPR008179">
    <property type="entry name" value="HisE"/>
</dbReference>
<dbReference type="InterPro" id="IPR021130">
    <property type="entry name" value="PRib-ATP_PPHydrolase-like"/>
</dbReference>
<dbReference type="NCBIfam" id="TIGR03188">
    <property type="entry name" value="histidine_hisI"/>
    <property type="match status" value="1"/>
</dbReference>
<dbReference type="NCBIfam" id="NF001610">
    <property type="entry name" value="PRK00400.1-1"/>
    <property type="match status" value="1"/>
</dbReference>
<dbReference type="PANTHER" id="PTHR42945">
    <property type="entry name" value="HISTIDINE BIOSYNTHESIS BIFUNCTIONAL PROTEIN"/>
    <property type="match status" value="1"/>
</dbReference>
<dbReference type="PANTHER" id="PTHR42945:SF1">
    <property type="entry name" value="HISTIDINE BIOSYNTHESIS BIFUNCTIONAL PROTEIN HIS7"/>
    <property type="match status" value="1"/>
</dbReference>
<dbReference type="Pfam" id="PF01503">
    <property type="entry name" value="PRA-PH"/>
    <property type="match status" value="1"/>
</dbReference>
<dbReference type="SUPFAM" id="SSF101386">
    <property type="entry name" value="all-alpha NTP pyrophosphatases"/>
    <property type="match status" value="1"/>
</dbReference>
<comment type="catalytic activity">
    <reaction evidence="1">
        <text>1-(5-phospho-beta-D-ribosyl)-ATP + H2O = 1-(5-phospho-beta-D-ribosyl)-5'-AMP + diphosphate + H(+)</text>
        <dbReference type="Rhea" id="RHEA:22828"/>
        <dbReference type="ChEBI" id="CHEBI:15377"/>
        <dbReference type="ChEBI" id="CHEBI:15378"/>
        <dbReference type="ChEBI" id="CHEBI:33019"/>
        <dbReference type="ChEBI" id="CHEBI:59457"/>
        <dbReference type="ChEBI" id="CHEBI:73183"/>
        <dbReference type="EC" id="3.6.1.31"/>
    </reaction>
</comment>
<comment type="pathway">
    <text evidence="1">Amino-acid biosynthesis; L-histidine biosynthesis; L-histidine from 5-phospho-alpha-D-ribose 1-diphosphate: step 2/9.</text>
</comment>
<comment type="subcellular location">
    <subcellularLocation>
        <location evidence="1">Cytoplasm</location>
    </subcellularLocation>
</comment>
<comment type="similarity">
    <text evidence="1">Belongs to the PRA-PH family.</text>
</comment>
<name>HIS2_MYCLB</name>
<keyword id="KW-0028">Amino-acid biosynthesis</keyword>
<keyword id="KW-0067">ATP-binding</keyword>
<keyword id="KW-0963">Cytoplasm</keyword>
<keyword id="KW-0368">Histidine biosynthesis</keyword>
<keyword id="KW-0378">Hydrolase</keyword>
<keyword id="KW-0547">Nucleotide-binding</keyword>
<sequence>MKQSLAVKTFEDLFAELSERARTRPTDSATVASLDGGIHALGKKILEEAGEVWLAAEHEPKEVLAEEISQLLYWTQVLMISRGLSLDDVYRKL</sequence>
<reference key="1">
    <citation type="journal article" date="2009" name="Nat. Genet.">
        <title>Comparative genomic and phylogeographic analysis of Mycobacterium leprae.</title>
        <authorList>
            <person name="Monot M."/>
            <person name="Honore N."/>
            <person name="Garnier T."/>
            <person name="Zidane N."/>
            <person name="Sherafi D."/>
            <person name="Paniz-Mondolfi A."/>
            <person name="Matsuoka M."/>
            <person name="Taylor G.M."/>
            <person name="Donoghue H.D."/>
            <person name="Bouwman A."/>
            <person name="Mays S."/>
            <person name="Watson C."/>
            <person name="Lockwood D."/>
            <person name="Khamispour A."/>
            <person name="Dowlati Y."/>
            <person name="Jianping S."/>
            <person name="Rea T.H."/>
            <person name="Vera-Cabrera L."/>
            <person name="Stefani M.M."/>
            <person name="Banu S."/>
            <person name="Macdonald M."/>
            <person name="Sapkota B.R."/>
            <person name="Spencer J.S."/>
            <person name="Thomas J."/>
            <person name="Harshman K."/>
            <person name="Singh P."/>
            <person name="Busso P."/>
            <person name="Gattiker A."/>
            <person name="Rougemont J."/>
            <person name="Brennan P.J."/>
            <person name="Cole S.T."/>
        </authorList>
    </citation>
    <scope>NUCLEOTIDE SEQUENCE [LARGE SCALE GENOMIC DNA]</scope>
    <source>
        <strain>Br4923</strain>
    </source>
</reference>